<gene>
    <name evidence="4" type="ordered locus">Teth514_1789</name>
</gene>
<dbReference type="EC" id="2.4.1.339" evidence="1"/>
<dbReference type="EMBL" id="CP000923">
    <property type="protein sequence ID" value="ABY93074.1"/>
    <property type="molecule type" value="Genomic_DNA"/>
</dbReference>
<dbReference type="RefSeq" id="WP_009052015.1">
    <property type="nucleotide sequence ID" value="NC_010320.1"/>
</dbReference>
<dbReference type="PDB" id="7FIP">
    <property type="method" value="X-ray"/>
    <property type="resolution" value="2.39 A"/>
    <property type="chains" value="A/B/C/D=1-302"/>
</dbReference>
<dbReference type="PDB" id="7FIQ">
    <property type="method" value="X-ray"/>
    <property type="resolution" value="2.22 A"/>
    <property type="chains" value="A/B/C/D=1-302"/>
</dbReference>
<dbReference type="PDB" id="7FIR">
    <property type="method" value="X-ray"/>
    <property type="resolution" value="2.20 A"/>
    <property type="chains" value="A/B/C/D=1-302"/>
</dbReference>
<dbReference type="PDB" id="7FIS">
    <property type="method" value="X-ray"/>
    <property type="resolution" value="2.19 A"/>
    <property type="chains" value="A/B/C/D=1-302"/>
</dbReference>
<dbReference type="PDBsum" id="7FIP"/>
<dbReference type="PDBsum" id="7FIQ"/>
<dbReference type="PDBsum" id="7FIR"/>
<dbReference type="PDBsum" id="7FIS"/>
<dbReference type="SMR" id="B0K2C3"/>
<dbReference type="CAZy" id="GH130">
    <property type="family name" value="Glycoside Hydrolase Family 130"/>
</dbReference>
<dbReference type="KEGG" id="tex:Teth514_1789"/>
<dbReference type="HOGENOM" id="CLU_046648_0_0_9"/>
<dbReference type="BioCyc" id="MetaCyc:MONOMER-19744"/>
<dbReference type="UniPathway" id="UPA00126"/>
<dbReference type="Proteomes" id="UP000002155">
    <property type="component" value="Chromosome"/>
</dbReference>
<dbReference type="GO" id="GO:0016757">
    <property type="term" value="F:glycosyltransferase activity"/>
    <property type="evidence" value="ECO:0007669"/>
    <property type="project" value="UniProtKB-KW"/>
</dbReference>
<dbReference type="GO" id="GO:0009298">
    <property type="term" value="P:GDP-mannose biosynthetic process"/>
    <property type="evidence" value="ECO:0007669"/>
    <property type="project" value="UniProtKB-UniPathway"/>
</dbReference>
<dbReference type="CDD" id="cd18614">
    <property type="entry name" value="GH130"/>
    <property type="match status" value="1"/>
</dbReference>
<dbReference type="Gene3D" id="2.115.10.20">
    <property type="entry name" value="Glycosyl hydrolase domain, family 43"/>
    <property type="match status" value="1"/>
</dbReference>
<dbReference type="InterPro" id="IPR023296">
    <property type="entry name" value="Glyco_hydro_beta-prop_sf"/>
</dbReference>
<dbReference type="InterPro" id="IPR007184">
    <property type="entry name" value="Mannoside_phosphorylase"/>
</dbReference>
<dbReference type="PANTHER" id="PTHR34106">
    <property type="entry name" value="GLYCOSIDASE"/>
    <property type="match status" value="1"/>
</dbReference>
<dbReference type="PANTHER" id="PTHR34106:SF5">
    <property type="entry name" value="GLYCOSIDASE"/>
    <property type="match status" value="1"/>
</dbReference>
<dbReference type="Pfam" id="PF04041">
    <property type="entry name" value="Glyco_hydro_130"/>
    <property type="match status" value="1"/>
</dbReference>
<dbReference type="PIRSF" id="PIRSF016202">
    <property type="entry name" value="PH1107"/>
    <property type="match status" value="1"/>
</dbReference>
<dbReference type="SUPFAM" id="SSF75005">
    <property type="entry name" value="Arabinanase/levansucrase/invertase"/>
    <property type="match status" value="1"/>
</dbReference>
<feature type="chain" id="PRO_0000452511" description="Beta-1,2-mannobiose phosphorylase">
    <location>
        <begin position="1"/>
        <end position="302"/>
    </location>
</feature>
<feature type="strand" evidence="5">
    <location>
        <begin position="5"/>
        <end position="7"/>
    </location>
</feature>
<feature type="helix" evidence="5">
    <location>
        <begin position="20"/>
        <end position="22"/>
    </location>
</feature>
<feature type="strand" evidence="5">
    <location>
        <begin position="23"/>
        <end position="34"/>
    </location>
</feature>
<feature type="strand" evidence="5">
    <location>
        <begin position="37"/>
        <end position="47"/>
    </location>
</feature>
<feature type="strand" evidence="5">
    <location>
        <begin position="53"/>
        <end position="55"/>
    </location>
</feature>
<feature type="helix" evidence="5">
    <location>
        <begin position="58"/>
        <end position="60"/>
    </location>
</feature>
<feature type="strand" evidence="5">
    <location>
        <begin position="64"/>
        <end position="79"/>
    </location>
</feature>
<feature type="turn" evidence="5">
    <location>
        <begin position="89"/>
        <end position="94"/>
    </location>
</feature>
<feature type="strand" evidence="5">
    <location>
        <begin position="95"/>
        <end position="104"/>
    </location>
</feature>
<feature type="strand" evidence="5">
    <location>
        <begin position="107"/>
        <end position="115"/>
    </location>
</feature>
<feature type="strand" evidence="5">
    <location>
        <begin position="123"/>
        <end position="135"/>
    </location>
</feature>
<feature type="strand" evidence="5">
    <location>
        <begin position="137"/>
        <end position="146"/>
    </location>
</feature>
<feature type="strand" evidence="5">
    <location>
        <begin position="160"/>
        <end position="165"/>
    </location>
</feature>
<feature type="strand" evidence="5">
    <location>
        <begin position="170"/>
        <end position="180"/>
    </location>
</feature>
<feature type="strand" evidence="5">
    <location>
        <begin position="183"/>
        <end position="189"/>
    </location>
</feature>
<feature type="strand" evidence="5">
    <location>
        <begin position="199"/>
        <end position="203"/>
    </location>
</feature>
<feature type="strand" evidence="5">
    <location>
        <begin position="211"/>
        <end position="221"/>
    </location>
</feature>
<feature type="strand" evidence="5">
    <location>
        <begin position="227"/>
        <end position="234"/>
    </location>
</feature>
<feature type="strand" evidence="5">
    <location>
        <begin position="241"/>
        <end position="245"/>
    </location>
</feature>
<feature type="helix" evidence="5">
    <location>
        <begin position="256"/>
        <end position="259"/>
    </location>
</feature>
<feature type="strand" evidence="5">
    <location>
        <begin position="260"/>
        <end position="274"/>
    </location>
</feature>
<feature type="strand" evidence="5">
    <location>
        <begin position="276"/>
        <end position="285"/>
    </location>
</feature>
<feature type="turn" evidence="5">
    <location>
        <begin position="286"/>
        <end position="288"/>
    </location>
</feature>
<feature type="strand" evidence="5">
    <location>
        <begin position="289"/>
        <end position="296"/>
    </location>
</feature>
<feature type="helix" evidence="5">
    <location>
        <begin position="297"/>
        <end position="299"/>
    </location>
</feature>
<sequence length="302" mass="35111">MFRLTRLSNKPILSPIKEHEWEKEAVFNAAVIYEGNKFHLFYRASNNKFVLNTEKPEEKYKFVSSIGYAVSEDGINFERFDKPVLVGEIPQEAWGVEDPRITKIDNKYYMLYTGFGGRDWLDFRICMVWSDDLKNWKGHRIVLDEPNKDAALLSEKINGKYVLFHRRMPDIWIAYSDDLVNWYNHKIIMSPKSHTWESKKIGIAGPPIKREDGWLLIYHGVDNNNVYRLGVALLDLKDPSKVIARQKEPILEPELDWEINGLVPNVVFSCGAVEVNDMYYVYYGAADTHIGVAVIEKEKVKF</sequence>
<accession>B0K2C3</accession>
<reference key="1">
    <citation type="submission" date="2008-01" db="EMBL/GenBank/DDBJ databases">
        <title>Complete sequence of Thermoanaerobacter sp. X514.</title>
        <authorList>
            <consortium name="US DOE Joint Genome Institute"/>
            <person name="Copeland A."/>
            <person name="Lucas S."/>
            <person name="Lapidus A."/>
            <person name="Barry K."/>
            <person name="Glavina del Rio T."/>
            <person name="Dalin E."/>
            <person name="Tice H."/>
            <person name="Pitluck S."/>
            <person name="Bruce D."/>
            <person name="Goodwin L."/>
            <person name="Saunders E."/>
            <person name="Brettin T."/>
            <person name="Detter J.C."/>
            <person name="Han C."/>
            <person name="Schmutz J."/>
            <person name="Larimer F."/>
            <person name="Land M."/>
            <person name="Hauser L."/>
            <person name="Kyrpides N."/>
            <person name="Kim E."/>
            <person name="Hemme C."/>
            <person name="Fields M.W."/>
            <person name="He Z."/>
            <person name="Zhou J."/>
            <person name="Richardson P."/>
        </authorList>
    </citation>
    <scope>NUCLEOTIDE SEQUENCE [LARGE SCALE GENOMIC DNA]</scope>
    <source>
        <strain>X514</strain>
    </source>
</reference>
<reference key="2">
    <citation type="journal article" date="2014" name="PLoS ONE">
        <title>Discovery of two beta-1,2-mannoside phosphorylases showing different chain-length specificities from Thermoanaerobacter sp. X-514.</title>
        <authorList>
            <person name="Chiku K."/>
            <person name="Nihira T."/>
            <person name="Suzuki E."/>
            <person name="Nishimoto M."/>
            <person name="Kitaoka M."/>
            <person name="Ohtsubo K."/>
            <person name="Nakai H."/>
        </authorList>
    </citation>
    <scope>FUNCTION</scope>
    <scope>CATALYTIC ACTIVITY</scope>
    <scope>BIOPHYSICOCHEMICAL PROPERTIES</scope>
    <scope>PATHWAY</scope>
    <scope>SUBUNIT</scope>
    <source>
        <strain>X514</strain>
    </source>
</reference>
<comment type="function">
    <text evidence="1">Probably involved in a salvage pathway for GDP-D-mannose biosynthesis (PubMed:25500577). Catalyzes the reversible phosphorolysis of 1,2-beta-oligomannan. In phosphorolytic reactions, prefers beta-1,2-mannobiose (beta-1,2-Man2) as substrate. Produces alpha-D-mannose 1-phosphate, which is the precursor of GDP-D-mannose (PubMed:25500577).</text>
</comment>
<comment type="catalytic activity">
    <reaction evidence="1">
        <text>beta-D-mannopyranosyl-(1-&gt;2)-D-mannopyranose + phosphate = alpha-D-mannose 1-phosphate + D-mannose</text>
        <dbReference type="Rhea" id="RHEA:49404"/>
        <dbReference type="ChEBI" id="CHEBI:4208"/>
        <dbReference type="ChEBI" id="CHEBI:43474"/>
        <dbReference type="ChEBI" id="CHEBI:58409"/>
        <dbReference type="ChEBI" id="CHEBI:62037"/>
        <dbReference type="EC" id="2.4.1.339"/>
    </reaction>
    <physiologicalReaction direction="left-to-right" evidence="1">
        <dbReference type="Rhea" id="RHEA:49405"/>
    </physiologicalReaction>
</comment>
<comment type="biophysicochemical properties">
    <kinetics>
        <KM evidence="1">0.46 mM for D-mannose (for the synthetic reaction)</KM>
        <KM evidence="1">0.69 mM for D-fructose (for the synthetic reaction)</KM>
        <KM evidence="1">1.8 mM for beta-1,2-Man2 (for the synthetic reaction)</KM>
        <KM evidence="1">2.1 mM for alpha-D-mannose 1-phosphate (for the synthetic reaction)</KM>
        <text evidence="1">kcat is 10 sec(-1) with D-mannose as substrate (for the synthetic reaction). kcat is 11 sec(-1) with D-fructose as substrate (for the synthetic reaction). kcat is 7.0 sec(-1) with beta-1,2-Man2 as substrate (for the synthetic reaction). kcat is 12 sec(-1) with alpha-D-mannose 1-phosphate as substrate (for the synthetic reaction).</text>
    </kinetics>
    <phDependence>
        <text evidence="1">Optimum pH is 6.0 for phosphorolytic activity. Optimum pH is 5.5 for the synthetic reaction.</text>
    </phDependence>
</comment>
<comment type="pathway">
    <text>Nucleotide-sugar biosynthesis; GDP-alpha-D-mannose biosynthesis.</text>
</comment>
<comment type="subunit">
    <text evidence="1">Monomer.</text>
</comment>
<comment type="similarity">
    <text evidence="3">Belongs to the glycosyl hydrolase 130 family.</text>
</comment>
<name>BMBP_THEPX</name>
<evidence type="ECO:0000269" key="1">
    <source>
    </source>
</evidence>
<evidence type="ECO:0000303" key="2">
    <source>
    </source>
</evidence>
<evidence type="ECO:0000305" key="3"/>
<evidence type="ECO:0000312" key="4">
    <source>
        <dbReference type="EMBL" id="ABY93074.1"/>
    </source>
</evidence>
<evidence type="ECO:0007829" key="5">
    <source>
        <dbReference type="PDB" id="7FIS"/>
    </source>
</evidence>
<keyword id="KW-0002">3D-structure</keyword>
<keyword id="KW-0119">Carbohydrate metabolism</keyword>
<keyword id="KW-0328">Glycosyltransferase</keyword>
<keyword id="KW-0808">Transferase</keyword>
<proteinExistence type="evidence at protein level"/>
<protein>
    <recommendedName>
        <fullName evidence="2">Beta-1,2-mannobiose phosphorylase</fullName>
        <ecNumber evidence="1">2.4.1.339</ecNumber>
    </recommendedName>
    <alternativeName>
        <fullName evidence="2">Beta-1,2-mannobiose:phosphate alpha-D-mannosyltransferase</fullName>
    </alternativeName>
</protein>
<organism>
    <name type="scientific">Thermoanaerobacter sp. (strain X514)</name>
    <dbReference type="NCBI Taxonomy" id="399726"/>
    <lineage>
        <taxon>Bacteria</taxon>
        <taxon>Bacillati</taxon>
        <taxon>Bacillota</taxon>
        <taxon>Clostridia</taxon>
        <taxon>Thermoanaerobacterales</taxon>
        <taxon>Thermoanaerobacteraceae</taxon>
        <taxon>Thermoanaerobacter</taxon>
    </lineage>
</organism>